<organism>
    <name type="scientific">Homo sapiens</name>
    <name type="common">Human</name>
    <dbReference type="NCBI Taxonomy" id="9606"/>
    <lineage>
        <taxon>Eukaryota</taxon>
        <taxon>Metazoa</taxon>
        <taxon>Chordata</taxon>
        <taxon>Craniata</taxon>
        <taxon>Vertebrata</taxon>
        <taxon>Euteleostomi</taxon>
        <taxon>Mammalia</taxon>
        <taxon>Eutheria</taxon>
        <taxon>Euarchontoglires</taxon>
        <taxon>Primates</taxon>
        <taxon>Haplorrhini</taxon>
        <taxon>Catarrhini</taxon>
        <taxon>Hominidae</taxon>
        <taxon>Homo</taxon>
    </lineage>
</organism>
<evidence type="ECO:0000255" key="1"/>
<evidence type="ECO:0000256" key="2">
    <source>
        <dbReference type="SAM" id="MobiDB-lite"/>
    </source>
</evidence>
<evidence type="ECO:0000269" key="3">
    <source>
    </source>
</evidence>
<evidence type="ECO:0000303" key="4">
    <source>
    </source>
</evidence>
<evidence type="ECO:0000305" key="5"/>
<feature type="chain" id="PRO_0000337081" description="Leucine-rich repeat and coiled-coil domain-containing protein 1">
    <location>
        <begin position="1"/>
        <end position="1032"/>
    </location>
</feature>
<feature type="repeat" description="LRR 1">
    <location>
        <begin position="44"/>
        <end position="65"/>
    </location>
</feature>
<feature type="repeat" description="LRR 2">
    <location>
        <begin position="66"/>
        <end position="87"/>
    </location>
</feature>
<feature type="repeat" description="LRR 3">
    <location>
        <begin position="88"/>
        <end position="109"/>
    </location>
</feature>
<feature type="repeat" description="LRR 4">
    <location>
        <begin position="110"/>
        <end position="131"/>
    </location>
</feature>
<feature type="repeat" description="LRR 5">
    <location>
        <begin position="136"/>
        <end position="157"/>
    </location>
</feature>
<feature type="domain" description="LRRCT">
    <location>
        <begin position="175"/>
        <end position="218"/>
    </location>
</feature>
<feature type="region of interest" description="Disordered" evidence="2">
    <location>
        <begin position="316"/>
        <end position="345"/>
    </location>
</feature>
<feature type="coiled-coil region" evidence="1">
    <location>
        <begin position="421"/>
        <end position="647"/>
    </location>
</feature>
<feature type="compositionally biased region" description="Basic and acidic residues" evidence="2">
    <location>
        <begin position="318"/>
        <end position="330"/>
    </location>
</feature>
<feature type="splice variant" id="VSP_033868" description="In isoform 2." evidence="4">
    <original>MEAAAAVVAAEAEVENEDGDSSCGDVCFMDKGLQ</original>
    <variation>MLLKSIFIVYIFFY</variation>
    <location>
        <begin position="1"/>
        <end position="34"/>
    </location>
</feature>
<feature type="sequence variant" id="VAR_043584" description="In dbSNP:rs16913589.">
    <original>H</original>
    <variation>Q</variation>
    <location>
        <position position="69"/>
    </location>
</feature>
<feature type="sequence variant" id="VAR_043585" description="In dbSNP:rs3736038.">
    <original>T</original>
    <variation>A</variation>
    <location>
        <position position="210"/>
    </location>
</feature>
<feature type="sequence variant" id="VAR_043586" description="In dbSNP:rs6985225.">
    <original>K</original>
    <variation>N</variation>
    <location>
        <position position="613"/>
    </location>
</feature>
<feature type="sequence conflict" description="In Ref. 1; BAB21855 and 2; BAG63888." evidence="5" ref="1 2">
    <original>C</original>
    <variation>Y</variation>
    <location>
        <position position="90"/>
    </location>
</feature>
<feature type="sequence conflict" description="In Ref. 5; AAH30701." evidence="5" ref="5">
    <original>I</original>
    <variation>V</variation>
    <location>
        <position position="121"/>
    </location>
</feature>
<feature type="sequence conflict" description="In Ref. 5; AAH30701." evidence="5" ref="5">
    <original>C</original>
    <variation>Y</variation>
    <location>
        <position position="343"/>
    </location>
</feature>
<feature type="sequence conflict" description="In Ref. 2; BAG63888." evidence="5" ref="2">
    <original>R</original>
    <variation>G</variation>
    <location>
        <position position="483"/>
    </location>
</feature>
<feature type="sequence conflict" description="In Ref. 2; BAB71626." evidence="5" ref="2">
    <original>S</original>
    <variation>P</variation>
    <location>
        <position position="687"/>
    </location>
</feature>
<feature type="sequence conflict" description="In Ref. 2; BAG63888." evidence="5" ref="2">
    <original>E</original>
    <variation>K</variation>
    <location>
        <position position="799"/>
    </location>
</feature>
<sequence>MEAAAAVVAAEAEVENEDGDSSCGDVCFMDKGLQSISELSLDSTLHAVNLHCNNISKIEAIDHIWNLQHLDLSSNQISRIEGLNTLTKLCTLNLSCNLITKVEGLEELINLTRLNVSYNHIDDLSGLIPLHGIKHKLRYIDLHSNRIDSIHHLLQCMVGLHFLTNLILEKDGDDNPVCRLPGYRAVILQTLPQLRILDCKNIFGEPVNLTEINSSQLQCLEGLLDNLVSSDSPLNISEDEIIDRMPVITAPIDELVPLEQFASTPSDAVLTSFMSVCQSSEPEKNNHENDLQNEIKLQKLDDQILQLLNETSNSIDNVLEKDPRPKRDTDITSESDYGNRKECNRKVPRRSKIPYDAKTIQTIKHHNKNYNSFVSCNRKMKPPYLKELYVSSSLANCPMLQESEKPKTEIIKVDQSHSEDNTYQSLVEQLDQEREKRWRAEQAENKLMDYIDELHKHANEKEDIHSLALLTTDRLKEIIFRERNSKGQLEVMVHKLQNEIKKLTVELMKAKDQQEDHLKHLRTLEKTLEKMERQKRQQQAAQIRLIQEVELKASAADREIYLLRTSLHREREQAQQLHQLLALKEQEHRKELETREFFTDADFQDALAKEIAKEEKKHEQMIKEYQEKIDVLSQQYMDLENEFRIALTVEARRFQDVKDGFENVATELAKSKHALIWAQRKENESSSLIKDLTCMVKEQKTKLAEVSKLKQETAANLQNQINTLEILIEDDKQKSIQIELLKHEKVQLISELAAKESLIFGLRTERKVWGHELAQQGSSLAQNRGKLEAQIESLSRENECLRKTNESDSDALRIKCKIIDDQTETIRKLKDCLQEKDEHIKRLQEKITEIEKCTQEQLDEKSSQLDEVLEKLERHNERKEKLKQQLKGKEVELEEIRKAYSTLNRKWHDKGELLCHLETQVKEVKEKFENKEKKLKAERDKSIELQKNAMEKLHSMDDAFKRQVDAIVEAHQAEIAQLANEKQKCIDSANLKVHQIEKEMRELLEETCKNKKTMEAKIKQLAFALNEIQQDM</sequence>
<gene>
    <name type="primary">LRRCC1</name>
    <name type="synonym">CLERC</name>
    <name type="synonym">KIAA1764</name>
</gene>
<reference key="1">
    <citation type="journal article" date="2000" name="DNA Res.">
        <title>Prediction of the coding sequences of unidentified human genes. XIX. The complete sequences of 100 new cDNA clones from brain which code for large proteins in vitro.</title>
        <authorList>
            <person name="Nagase T."/>
            <person name="Kikuno R."/>
            <person name="Hattori A."/>
            <person name="Kondo Y."/>
            <person name="Okumura K."/>
            <person name="Ohara O."/>
        </authorList>
    </citation>
    <scope>NUCLEOTIDE SEQUENCE [LARGE SCALE MRNA] (ISOFORM 2)</scope>
    <source>
        <tissue>Brain</tissue>
    </source>
</reference>
<reference key="2">
    <citation type="journal article" date="2004" name="Nat. Genet.">
        <title>Complete sequencing and characterization of 21,243 full-length human cDNAs.</title>
        <authorList>
            <person name="Ota T."/>
            <person name="Suzuki Y."/>
            <person name="Nishikawa T."/>
            <person name="Otsuki T."/>
            <person name="Sugiyama T."/>
            <person name="Irie R."/>
            <person name="Wakamatsu A."/>
            <person name="Hayashi K."/>
            <person name="Sato H."/>
            <person name="Nagai K."/>
            <person name="Kimura K."/>
            <person name="Makita H."/>
            <person name="Sekine M."/>
            <person name="Obayashi M."/>
            <person name="Nishi T."/>
            <person name="Shibahara T."/>
            <person name="Tanaka T."/>
            <person name="Ishii S."/>
            <person name="Yamamoto J."/>
            <person name="Saito K."/>
            <person name="Kawai Y."/>
            <person name="Isono Y."/>
            <person name="Nakamura Y."/>
            <person name="Nagahari K."/>
            <person name="Murakami K."/>
            <person name="Yasuda T."/>
            <person name="Iwayanagi T."/>
            <person name="Wagatsuma M."/>
            <person name="Shiratori A."/>
            <person name="Sudo H."/>
            <person name="Hosoiri T."/>
            <person name="Kaku Y."/>
            <person name="Kodaira H."/>
            <person name="Kondo H."/>
            <person name="Sugawara M."/>
            <person name="Takahashi M."/>
            <person name="Kanda K."/>
            <person name="Yokoi T."/>
            <person name="Furuya T."/>
            <person name="Kikkawa E."/>
            <person name="Omura Y."/>
            <person name="Abe K."/>
            <person name="Kamihara K."/>
            <person name="Katsuta N."/>
            <person name="Sato K."/>
            <person name="Tanikawa M."/>
            <person name="Yamazaki M."/>
            <person name="Ninomiya K."/>
            <person name="Ishibashi T."/>
            <person name="Yamashita H."/>
            <person name="Murakawa K."/>
            <person name="Fujimori K."/>
            <person name="Tanai H."/>
            <person name="Kimata M."/>
            <person name="Watanabe M."/>
            <person name="Hiraoka S."/>
            <person name="Chiba Y."/>
            <person name="Ishida S."/>
            <person name="Ono Y."/>
            <person name="Takiguchi S."/>
            <person name="Watanabe S."/>
            <person name="Yosida M."/>
            <person name="Hotuta T."/>
            <person name="Kusano J."/>
            <person name="Kanehori K."/>
            <person name="Takahashi-Fujii A."/>
            <person name="Hara H."/>
            <person name="Tanase T.-O."/>
            <person name="Nomura Y."/>
            <person name="Togiya S."/>
            <person name="Komai F."/>
            <person name="Hara R."/>
            <person name="Takeuchi K."/>
            <person name="Arita M."/>
            <person name="Imose N."/>
            <person name="Musashino K."/>
            <person name="Yuuki H."/>
            <person name="Oshima A."/>
            <person name="Sasaki N."/>
            <person name="Aotsuka S."/>
            <person name="Yoshikawa Y."/>
            <person name="Matsunawa H."/>
            <person name="Ichihara T."/>
            <person name="Shiohata N."/>
            <person name="Sano S."/>
            <person name="Moriya S."/>
            <person name="Momiyama H."/>
            <person name="Satoh N."/>
            <person name="Takami S."/>
            <person name="Terashima Y."/>
            <person name="Suzuki O."/>
            <person name="Nakagawa S."/>
            <person name="Senoh A."/>
            <person name="Mizoguchi H."/>
            <person name="Goto Y."/>
            <person name="Shimizu F."/>
            <person name="Wakebe H."/>
            <person name="Hishigaki H."/>
            <person name="Watanabe T."/>
            <person name="Sugiyama A."/>
            <person name="Takemoto M."/>
            <person name="Kawakami B."/>
            <person name="Yamazaki M."/>
            <person name="Watanabe K."/>
            <person name="Kumagai A."/>
            <person name="Itakura S."/>
            <person name="Fukuzumi Y."/>
            <person name="Fujimori Y."/>
            <person name="Komiyama M."/>
            <person name="Tashiro H."/>
            <person name="Tanigami A."/>
            <person name="Fujiwara T."/>
            <person name="Ono T."/>
            <person name="Yamada K."/>
            <person name="Fujii Y."/>
            <person name="Ozaki K."/>
            <person name="Hirao M."/>
            <person name="Ohmori Y."/>
            <person name="Kawabata A."/>
            <person name="Hikiji T."/>
            <person name="Kobatake N."/>
            <person name="Inagaki H."/>
            <person name="Ikema Y."/>
            <person name="Okamoto S."/>
            <person name="Okitani R."/>
            <person name="Kawakami T."/>
            <person name="Noguchi S."/>
            <person name="Itoh T."/>
            <person name="Shigeta K."/>
            <person name="Senba T."/>
            <person name="Matsumura K."/>
            <person name="Nakajima Y."/>
            <person name="Mizuno T."/>
            <person name="Morinaga M."/>
            <person name="Sasaki M."/>
            <person name="Togashi T."/>
            <person name="Oyama M."/>
            <person name="Hata H."/>
            <person name="Watanabe M."/>
            <person name="Komatsu T."/>
            <person name="Mizushima-Sugano J."/>
            <person name="Satoh T."/>
            <person name="Shirai Y."/>
            <person name="Takahashi Y."/>
            <person name="Nakagawa K."/>
            <person name="Okumura K."/>
            <person name="Nagase T."/>
            <person name="Nomura N."/>
            <person name="Kikuchi H."/>
            <person name="Masuho Y."/>
            <person name="Yamashita R."/>
            <person name="Nakai K."/>
            <person name="Yada T."/>
            <person name="Nakamura Y."/>
            <person name="Ohara O."/>
            <person name="Isogai T."/>
            <person name="Sugano S."/>
        </authorList>
    </citation>
    <scope>NUCLEOTIDE SEQUENCE [LARGE SCALE MRNA] (ISOFORM 1)</scope>
    <source>
        <tissue>Gastric mucosa</tissue>
        <tissue>Teratocarcinoma</tissue>
        <tissue>Testis</tissue>
    </source>
</reference>
<reference key="3">
    <citation type="journal article" date="2006" name="Nature">
        <title>DNA sequence and analysis of human chromosome 8.</title>
        <authorList>
            <person name="Nusbaum C."/>
            <person name="Mikkelsen T.S."/>
            <person name="Zody M.C."/>
            <person name="Asakawa S."/>
            <person name="Taudien S."/>
            <person name="Garber M."/>
            <person name="Kodira C.D."/>
            <person name="Schueler M.G."/>
            <person name="Shimizu A."/>
            <person name="Whittaker C.A."/>
            <person name="Chang J.L."/>
            <person name="Cuomo C.A."/>
            <person name="Dewar K."/>
            <person name="FitzGerald M.G."/>
            <person name="Yang X."/>
            <person name="Allen N.R."/>
            <person name="Anderson S."/>
            <person name="Asakawa T."/>
            <person name="Blechschmidt K."/>
            <person name="Bloom T."/>
            <person name="Borowsky M.L."/>
            <person name="Butler J."/>
            <person name="Cook A."/>
            <person name="Corum B."/>
            <person name="DeArellano K."/>
            <person name="DeCaprio D."/>
            <person name="Dooley K.T."/>
            <person name="Dorris L. III"/>
            <person name="Engels R."/>
            <person name="Gloeckner G."/>
            <person name="Hafez N."/>
            <person name="Hagopian D.S."/>
            <person name="Hall J.L."/>
            <person name="Ishikawa S.K."/>
            <person name="Jaffe D.B."/>
            <person name="Kamat A."/>
            <person name="Kudoh J."/>
            <person name="Lehmann R."/>
            <person name="Lokitsang T."/>
            <person name="Macdonald P."/>
            <person name="Major J.E."/>
            <person name="Matthews C.D."/>
            <person name="Mauceli E."/>
            <person name="Menzel U."/>
            <person name="Mihalev A.H."/>
            <person name="Minoshima S."/>
            <person name="Murayama Y."/>
            <person name="Naylor J.W."/>
            <person name="Nicol R."/>
            <person name="Nguyen C."/>
            <person name="O'Leary S.B."/>
            <person name="O'Neill K."/>
            <person name="Parker S.C.J."/>
            <person name="Polley A."/>
            <person name="Raymond C.K."/>
            <person name="Reichwald K."/>
            <person name="Rodriguez J."/>
            <person name="Sasaki T."/>
            <person name="Schilhabel M."/>
            <person name="Siddiqui R."/>
            <person name="Smith C.L."/>
            <person name="Sneddon T.P."/>
            <person name="Talamas J.A."/>
            <person name="Tenzin P."/>
            <person name="Topham K."/>
            <person name="Venkataraman V."/>
            <person name="Wen G."/>
            <person name="Yamazaki S."/>
            <person name="Young S.K."/>
            <person name="Zeng Q."/>
            <person name="Zimmer A.R."/>
            <person name="Rosenthal A."/>
            <person name="Birren B.W."/>
            <person name="Platzer M."/>
            <person name="Shimizu N."/>
            <person name="Lander E.S."/>
        </authorList>
    </citation>
    <scope>NUCLEOTIDE SEQUENCE [LARGE SCALE GENOMIC DNA]</scope>
</reference>
<reference key="4">
    <citation type="submission" date="2005-07" db="EMBL/GenBank/DDBJ databases">
        <authorList>
            <person name="Mural R.J."/>
            <person name="Istrail S."/>
            <person name="Sutton G.G."/>
            <person name="Florea L."/>
            <person name="Halpern A.L."/>
            <person name="Mobarry C.M."/>
            <person name="Lippert R."/>
            <person name="Walenz B."/>
            <person name="Shatkay H."/>
            <person name="Dew I."/>
            <person name="Miller J.R."/>
            <person name="Flanigan M.J."/>
            <person name="Edwards N.J."/>
            <person name="Bolanos R."/>
            <person name="Fasulo D."/>
            <person name="Halldorsson B.V."/>
            <person name="Hannenhalli S."/>
            <person name="Turner R."/>
            <person name="Yooseph S."/>
            <person name="Lu F."/>
            <person name="Nusskern D.R."/>
            <person name="Shue B.C."/>
            <person name="Zheng X.H."/>
            <person name="Zhong F."/>
            <person name="Delcher A.L."/>
            <person name="Huson D.H."/>
            <person name="Kravitz S.A."/>
            <person name="Mouchard L."/>
            <person name="Reinert K."/>
            <person name="Remington K.A."/>
            <person name="Clark A.G."/>
            <person name="Waterman M.S."/>
            <person name="Eichler E.E."/>
            <person name="Adams M.D."/>
            <person name="Hunkapiller M.W."/>
            <person name="Myers E.W."/>
            <person name="Venter J.C."/>
        </authorList>
    </citation>
    <scope>NUCLEOTIDE SEQUENCE [LARGE SCALE GENOMIC DNA]</scope>
</reference>
<reference key="5">
    <citation type="journal article" date="2004" name="Genome Res.">
        <title>The status, quality, and expansion of the NIH full-length cDNA project: the Mammalian Gene Collection (MGC).</title>
        <authorList>
            <consortium name="The MGC Project Team"/>
        </authorList>
    </citation>
    <scope>NUCLEOTIDE SEQUENCE [LARGE SCALE MRNA] (ISOFORM 1)</scope>
    <source>
        <tissue>Testis</tissue>
    </source>
</reference>
<reference key="6">
    <citation type="journal article" date="2008" name="Cell Cycle">
        <title>An evolutionarily conserved leucine-rich repeat protein CLERC is a centrosomal protein required for spindle pole integrity.</title>
        <authorList>
            <person name="Muto Y."/>
            <person name="Yoshioka T."/>
            <person name="Kimura M."/>
            <person name="Matsunami M."/>
            <person name="Saya H."/>
            <person name="Okano Y."/>
        </authorList>
    </citation>
    <scope>IDENTIFICATION</scope>
    <scope>FUNCTION</scope>
    <scope>SUBCELLULAR LOCATION</scope>
</reference>
<reference key="7">
    <citation type="journal article" date="2011" name="BMC Syst. Biol.">
        <title>Initial characterization of the human central proteome.</title>
        <authorList>
            <person name="Burkard T.R."/>
            <person name="Planyavsky M."/>
            <person name="Kaupe I."/>
            <person name="Breitwieser F.P."/>
            <person name="Buerckstuemmer T."/>
            <person name="Bennett K.L."/>
            <person name="Superti-Furga G."/>
            <person name="Colinge J."/>
        </authorList>
    </citation>
    <scope>IDENTIFICATION BY MASS SPECTROMETRY [LARGE SCALE ANALYSIS]</scope>
</reference>
<accession>Q9C099</accession>
<accession>B4DYX6</accession>
<accession>B5RI11</accession>
<accession>Q8N768</accession>
<accession>Q96DK7</accession>
<accession>Q96N01</accession>
<comment type="function">
    <text evidence="3">Required for the organization of the mitotic spindle. Maintains the structural integrity of centrosomes during mitosis.</text>
</comment>
<comment type="subcellular location">
    <subcellularLocation>
        <location evidence="3">Cytoplasm</location>
        <location evidence="3">Cytoskeleton</location>
        <location evidence="3">Microtubule organizing center</location>
        <location evidence="3">Centrosome</location>
        <location evidence="3">Centriole</location>
    </subcellularLocation>
    <text>Associates with the centrosome throughout the cell cycle and extensively accumulates during the mitotic phase.</text>
</comment>
<comment type="alternative products">
    <event type="alternative splicing"/>
    <isoform>
        <id>Q9C099-1</id>
        <name>1</name>
        <sequence type="displayed"/>
    </isoform>
    <isoform>
        <id>Q9C099-2</id>
        <name>2</name>
        <sequence type="described" ref="VSP_033868"/>
    </isoform>
</comment>
<comment type="similarity">
    <text evidence="5">Belongs to the LRRCC1 family.</text>
</comment>
<comment type="sequence caution" evidence="5">
    <conflict type="erroneous termination">
        <sequence resource="EMBL-CDS" id="AAH30701"/>
    </conflict>
    <text>Truncated C-terminus.</text>
</comment>
<comment type="sequence caution" evidence="5">
    <conflict type="erroneous initiation">
        <sequence resource="EMBL-CDS" id="BAB21855"/>
    </conflict>
    <text>Extended N-terminus.</text>
</comment>
<comment type="sequence caution" evidence="5">
    <conflict type="erroneous initiation">
        <sequence resource="EMBL-CDS" id="BAB71115"/>
    </conflict>
    <text>Truncated N-terminus.</text>
</comment>
<comment type="sequence caution" evidence="5">
    <conflict type="miscellaneous discrepancy">
        <sequence resource="EMBL-CDS" id="BAB71115"/>
    </conflict>
    <text>The sequence differs from that shown upstream of position 104 for unknown reason.</text>
</comment>
<comment type="sequence caution" evidence="5">
    <conflict type="erroneous initiation">
        <sequence resource="EMBL-CDS" id="BAB71626"/>
    </conflict>
    <text>Truncated N-terminus.</text>
</comment>
<comment type="sequence caution" evidence="5">
    <conflict type="erroneous initiation">
        <sequence resource="EMBL-CDS" id="BAG63888"/>
    </conflict>
    <text>Truncated N-terminus.</text>
</comment>
<comment type="sequence caution" evidence="5">
    <conflict type="miscellaneous discrepancy">
        <sequence resource="EMBL-CDS" id="BAG63888"/>
    </conflict>
    <text>Readthrough of an in-frame TAG stop codon in position 34 translated as Gln.</text>
</comment>
<dbReference type="EMBL" id="AB051551">
    <property type="protein sequence ID" value="BAB21855.1"/>
    <property type="status" value="ALT_INIT"/>
    <property type="molecule type" value="mRNA"/>
</dbReference>
<dbReference type="EMBL" id="AK302648">
    <property type="protein sequence ID" value="BAG63888.1"/>
    <property type="status" value="ALT_SEQ"/>
    <property type="molecule type" value="mRNA"/>
</dbReference>
<dbReference type="EMBL" id="AK056185">
    <property type="protein sequence ID" value="BAB71115.1"/>
    <property type="status" value="ALT_SEQ"/>
    <property type="molecule type" value="mRNA"/>
</dbReference>
<dbReference type="EMBL" id="AK057990">
    <property type="protein sequence ID" value="BAB71626.1"/>
    <property type="status" value="ALT_INIT"/>
    <property type="molecule type" value="mRNA"/>
</dbReference>
<dbReference type="EMBL" id="AC011773">
    <property type="status" value="NOT_ANNOTATED_CDS"/>
    <property type="molecule type" value="Genomic_DNA"/>
</dbReference>
<dbReference type="EMBL" id="AC083962">
    <property type="status" value="NOT_ANNOTATED_CDS"/>
    <property type="molecule type" value="Genomic_DNA"/>
</dbReference>
<dbReference type="EMBL" id="CH471068">
    <property type="protein sequence ID" value="EAW87121.1"/>
    <property type="molecule type" value="Genomic_DNA"/>
</dbReference>
<dbReference type="EMBL" id="BC030701">
    <property type="protein sequence ID" value="AAH30701.3"/>
    <property type="status" value="ALT_SEQ"/>
    <property type="molecule type" value="mRNA"/>
</dbReference>
<dbReference type="EMBL" id="BR000818">
    <property type="protein sequence ID" value="FAA00427.1"/>
    <property type="molecule type" value="mRNA"/>
</dbReference>
<dbReference type="CCDS" id="CCDS43750.1">
    <molecule id="Q9C099-1"/>
</dbReference>
<dbReference type="RefSeq" id="NP_208325.3">
    <molecule id="Q9C099-1"/>
    <property type="nucleotide sequence ID" value="NM_033402.4"/>
</dbReference>
<dbReference type="SMR" id="Q9C099"/>
<dbReference type="BioGRID" id="124531">
    <property type="interactions" value="32"/>
</dbReference>
<dbReference type="FunCoup" id="Q9C099">
    <property type="interactions" value="470"/>
</dbReference>
<dbReference type="IntAct" id="Q9C099">
    <property type="interactions" value="39"/>
</dbReference>
<dbReference type="MINT" id="Q9C099"/>
<dbReference type="STRING" id="9606.ENSP00000353538"/>
<dbReference type="GlyGen" id="Q9C099">
    <property type="glycosylation" value="2 sites, 1 N-linked glycan (1 site), 1 O-linked glycan (1 site)"/>
</dbReference>
<dbReference type="iPTMnet" id="Q9C099"/>
<dbReference type="PhosphoSitePlus" id="Q9C099"/>
<dbReference type="BioMuta" id="LRRCC1"/>
<dbReference type="DMDM" id="189028877"/>
<dbReference type="jPOST" id="Q9C099"/>
<dbReference type="MassIVE" id="Q9C099"/>
<dbReference type="PaxDb" id="9606-ENSP00000353538"/>
<dbReference type="PeptideAtlas" id="Q9C099"/>
<dbReference type="ProteomicsDB" id="79973">
    <molecule id="Q9C099-1"/>
</dbReference>
<dbReference type="ProteomicsDB" id="79974">
    <molecule id="Q9C099-2"/>
</dbReference>
<dbReference type="Pumba" id="Q9C099"/>
<dbReference type="Antibodypedia" id="2444">
    <property type="antibodies" value="15 antibodies from 9 providers"/>
</dbReference>
<dbReference type="DNASU" id="85444"/>
<dbReference type="Ensembl" id="ENST00000360375.8">
    <molecule id="Q9C099-1"/>
    <property type="protein sequence ID" value="ENSP00000353538.3"/>
    <property type="gene ID" value="ENSG00000133739.16"/>
</dbReference>
<dbReference type="Ensembl" id="ENST00000414626.2">
    <molecule id="Q9C099-2"/>
    <property type="protein sequence ID" value="ENSP00000394695.2"/>
    <property type="gene ID" value="ENSG00000133739.16"/>
</dbReference>
<dbReference type="GeneID" id="85444"/>
<dbReference type="KEGG" id="hsa:85444"/>
<dbReference type="MANE-Select" id="ENST00000360375.8">
    <property type="protein sequence ID" value="ENSP00000353538.3"/>
    <property type="RefSeq nucleotide sequence ID" value="NM_033402.5"/>
    <property type="RefSeq protein sequence ID" value="NP_208325.3"/>
</dbReference>
<dbReference type="UCSC" id="uc003ycw.4">
    <molecule id="Q9C099-1"/>
    <property type="organism name" value="human"/>
</dbReference>
<dbReference type="AGR" id="HGNC:29373"/>
<dbReference type="CTD" id="85444"/>
<dbReference type="DisGeNET" id="85444"/>
<dbReference type="GeneCards" id="LRRCC1"/>
<dbReference type="HGNC" id="HGNC:29373">
    <property type="gene designation" value="LRRCC1"/>
</dbReference>
<dbReference type="HPA" id="ENSG00000133739">
    <property type="expression patterns" value="Tissue enhanced (testis)"/>
</dbReference>
<dbReference type="MIM" id="617791">
    <property type="type" value="gene"/>
</dbReference>
<dbReference type="neXtProt" id="NX_Q9C099"/>
<dbReference type="OpenTargets" id="ENSG00000133739"/>
<dbReference type="PharmGKB" id="PA142671519"/>
<dbReference type="VEuPathDB" id="HostDB:ENSG00000133739"/>
<dbReference type="eggNOG" id="KOG0531">
    <property type="taxonomic scope" value="Eukaryota"/>
</dbReference>
<dbReference type="GeneTree" id="ENSGT00940000157414"/>
<dbReference type="HOGENOM" id="CLU_011297_1_0_1"/>
<dbReference type="InParanoid" id="Q9C099"/>
<dbReference type="OMA" id="RDQQDDH"/>
<dbReference type="OrthoDB" id="7451790at2759"/>
<dbReference type="PAN-GO" id="Q9C099">
    <property type="GO annotations" value="2 GO annotations based on evolutionary models"/>
</dbReference>
<dbReference type="PhylomeDB" id="Q9C099"/>
<dbReference type="TreeFam" id="TF329470"/>
<dbReference type="PathwayCommons" id="Q9C099"/>
<dbReference type="SignaLink" id="Q9C099"/>
<dbReference type="BioGRID-ORCS" id="85444">
    <property type="hits" value="16 hits in 1158 CRISPR screens"/>
</dbReference>
<dbReference type="CD-CODE" id="8C2F96ED">
    <property type="entry name" value="Centrosome"/>
</dbReference>
<dbReference type="ChiTaRS" id="LRRCC1">
    <property type="organism name" value="human"/>
</dbReference>
<dbReference type="GenomeRNAi" id="85444"/>
<dbReference type="Pharos" id="Q9C099">
    <property type="development level" value="Tdark"/>
</dbReference>
<dbReference type="PRO" id="PR:Q9C099"/>
<dbReference type="Proteomes" id="UP000005640">
    <property type="component" value="Chromosome 8"/>
</dbReference>
<dbReference type="RNAct" id="Q9C099">
    <property type="molecule type" value="protein"/>
</dbReference>
<dbReference type="Bgee" id="ENSG00000133739">
    <property type="expression patterns" value="Expressed in calcaneal tendon and 124 other cell types or tissues"/>
</dbReference>
<dbReference type="ExpressionAtlas" id="Q9C099">
    <property type="expression patterns" value="baseline and differential"/>
</dbReference>
<dbReference type="GO" id="GO:0005814">
    <property type="term" value="C:centriole"/>
    <property type="evidence" value="ECO:0007669"/>
    <property type="project" value="UniProtKB-SubCell"/>
</dbReference>
<dbReference type="GO" id="GO:0005813">
    <property type="term" value="C:centrosome"/>
    <property type="evidence" value="ECO:0000314"/>
    <property type="project" value="HPA"/>
</dbReference>
<dbReference type="GO" id="GO:0005737">
    <property type="term" value="C:cytoplasm"/>
    <property type="evidence" value="ECO:0000318"/>
    <property type="project" value="GO_Central"/>
</dbReference>
<dbReference type="GO" id="GO:0051301">
    <property type="term" value="P:cell division"/>
    <property type="evidence" value="ECO:0007669"/>
    <property type="project" value="UniProtKB-KW"/>
</dbReference>
<dbReference type="FunFam" id="3.80.10.10:FF:000148">
    <property type="entry name" value="Leucine rich repeat and coiled-coil centrosomal protein 1"/>
    <property type="match status" value="1"/>
</dbReference>
<dbReference type="FunFam" id="3.80.10.10:FF:000171">
    <property type="entry name" value="Leucine rich repeat and coiled-coil centrosomal protein 1"/>
    <property type="match status" value="1"/>
</dbReference>
<dbReference type="Gene3D" id="3.80.10.10">
    <property type="entry name" value="Ribonuclease Inhibitor"/>
    <property type="match status" value="2"/>
</dbReference>
<dbReference type="InterPro" id="IPR001611">
    <property type="entry name" value="Leu-rich_rpt"/>
</dbReference>
<dbReference type="InterPro" id="IPR025875">
    <property type="entry name" value="Leu-rich_rpt_4"/>
</dbReference>
<dbReference type="InterPro" id="IPR032675">
    <property type="entry name" value="LRR_dom_sf"/>
</dbReference>
<dbReference type="PANTHER" id="PTHR15454:SF34">
    <property type="entry name" value="LEUCINE-RICH REPEAT AND COILED-COIL DOMAIN-CONTAINING PROTEIN 1"/>
    <property type="match status" value="1"/>
</dbReference>
<dbReference type="PANTHER" id="PTHR15454">
    <property type="entry name" value="NISCHARIN RELATED"/>
    <property type="match status" value="1"/>
</dbReference>
<dbReference type="Pfam" id="PF12799">
    <property type="entry name" value="LRR_4"/>
    <property type="match status" value="1"/>
</dbReference>
<dbReference type="SMART" id="SM00365">
    <property type="entry name" value="LRR_SD22"/>
    <property type="match status" value="3"/>
</dbReference>
<dbReference type="SUPFAM" id="SSF52058">
    <property type="entry name" value="L domain-like"/>
    <property type="match status" value="1"/>
</dbReference>
<dbReference type="PROSITE" id="PS51450">
    <property type="entry name" value="LRR"/>
    <property type="match status" value="5"/>
</dbReference>
<name>LRCC1_HUMAN</name>
<protein>
    <recommendedName>
        <fullName>Leucine-rich repeat and coiled-coil domain-containing protein 1</fullName>
    </recommendedName>
    <alternativeName>
        <fullName>Centrosomal leucine-rich repeat and coiled-coil domain-containing protein</fullName>
    </alternativeName>
</protein>
<keyword id="KW-0025">Alternative splicing</keyword>
<keyword id="KW-0131">Cell cycle</keyword>
<keyword id="KW-0132">Cell division</keyword>
<keyword id="KW-0175">Coiled coil</keyword>
<keyword id="KW-0963">Cytoplasm</keyword>
<keyword id="KW-0206">Cytoskeleton</keyword>
<keyword id="KW-0433">Leucine-rich repeat</keyword>
<keyword id="KW-0498">Mitosis</keyword>
<keyword id="KW-1267">Proteomics identification</keyword>
<keyword id="KW-1185">Reference proteome</keyword>
<keyword id="KW-0677">Repeat</keyword>
<proteinExistence type="evidence at protein level"/>